<proteinExistence type="evidence at protein level"/>
<keyword id="KW-0028">Amino-acid biosynthesis</keyword>
<keyword id="KW-0055">Arginine biosynthesis</keyword>
<keyword id="KW-0067">ATP-binding</keyword>
<keyword id="KW-0436">Ligase</keyword>
<keyword id="KW-0496">Mitochondrion</keyword>
<keyword id="KW-0547">Nucleotide-binding</keyword>
<keyword id="KW-1185">Reference proteome</keyword>
<keyword id="KW-0809">Transit peptide</keyword>
<reference key="1">
    <citation type="journal article" date="1990" name="J. Biol. Chem.">
        <title>The Neurospora crassa arg-2 locus. Structure and expression of the gene encoding the small subunit of arginine-specific carbamoyl phosphate synthetase.</title>
        <authorList>
            <person name="Orbach M.J."/>
            <person name="Sachs M.S."/>
            <person name="Yanofsky C."/>
        </authorList>
    </citation>
    <scope>NUCLEOTIDE SEQUENCE [GENOMIC DNA]</scope>
</reference>
<reference key="2">
    <citation type="journal article" date="2003" name="Nature">
        <title>The genome sequence of the filamentous fungus Neurospora crassa.</title>
        <authorList>
            <person name="Galagan J.E."/>
            <person name="Calvo S.E."/>
            <person name="Borkovich K.A."/>
            <person name="Selker E.U."/>
            <person name="Read N.D."/>
            <person name="Jaffe D.B."/>
            <person name="FitzHugh W."/>
            <person name="Ma L.-J."/>
            <person name="Smirnov S."/>
            <person name="Purcell S."/>
            <person name="Rehman B."/>
            <person name="Elkins T."/>
            <person name="Engels R."/>
            <person name="Wang S."/>
            <person name="Nielsen C.B."/>
            <person name="Butler J."/>
            <person name="Endrizzi M."/>
            <person name="Qui D."/>
            <person name="Ianakiev P."/>
            <person name="Bell-Pedersen D."/>
            <person name="Nelson M.A."/>
            <person name="Werner-Washburne M."/>
            <person name="Selitrennikoff C.P."/>
            <person name="Kinsey J.A."/>
            <person name="Braun E.L."/>
            <person name="Zelter A."/>
            <person name="Schulte U."/>
            <person name="Kothe G.O."/>
            <person name="Jedd G."/>
            <person name="Mewes H.-W."/>
            <person name="Staben C."/>
            <person name="Marcotte E."/>
            <person name="Greenberg D."/>
            <person name="Roy A."/>
            <person name="Foley K."/>
            <person name="Naylor J."/>
            <person name="Stange-Thomann N."/>
            <person name="Barrett R."/>
            <person name="Gnerre S."/>
            <person name="Kamal M."/>
            <person name="Kamvysselis M."/>
            <person name="Mauceli E.W."/>
            <person name="Bielke C."/>
            <person name="Rudd S."/>
            <person name="Frishman D."/>
            <person name="Krystofova S."/>
            <person name="Rasmussen C."/>
            <person name="Metzenberg R.L."/>
            <person name="Perkins D.D."/>
            <person name="Kroken S."/>
            <person name="Cogoni C."/>
            <person name="Macino G."/>
            <person name="Catcheside D.E.A."/>
            <person name="Li W."/>
            <person name="Pratt R.J."/>
            <person name="Osmani S.A."/>
            <person name="DeSouza C.P.C."/>
            <person name="Glass N.L."/>
            <person name="Orbach M.J."/>
            <person name="Berglund J.A."/>
            <person name="Voelker R."/>
            <person name="Yarden O."/>
            <person name="Plamann M."/>
            <person name="Seiler S."/>
            <person name="Dunlap J.C."/>
            <person name="Radford A."/>
            <person name="Aramayo R."/>
            <person name="Natvig D.O."/>
            <person name="Alex L.A."/>
            <person name="Mannhaupt G."/>
            <person name="Ebbole D.J."/>
            <person name="Freitag M."/>
            <person name="Paulsen I."/>
            <person name="Sachs M.S."/>
            <person name="Lander E.S."/>
            <person name="Nusbaum C."/>
            <person name="Birren B.W."/>
        </authorList>
    </citation>
    <scope>NUCLEOTIDE SEQUENCE [LARGE SCALE GENOMIC DNA]</scope>
    <source>
        <strain>ATCC 24698 / 74-OR23-1A / CBS 708.71 / DSM 1257 / FGSC 987</strain>
    </source>
</reference>
<reference key="3">
    <citation type="journal article" date="1965" name="Biochim. Biophys. Acta">
        <title>Carbamyl phosphate synthesis in Neurospora crassa. II. Genetics, metabolic position, and regulation of arginine-specific carbamyl phosphokinase.</title>
        <authorList>
            <person name="Davis R.H."/>
        </authorList>
    </citation>
    <scope>FUNCTION</scope>
</reference>
<reference key="4">
    <citation type="book" date="1967" name="Organisational biosynthesis">
        <title>Channeling in Neurospora metabolism.</title>
        <editorList>
            <person name="Vogel H.J."/>
            <person name="Lamper L.O."/>
            <person name="Bryson V."/>
        </editorList>
        <authorList>
            <person name="Davis R.H."/>
        </authorList>
    </citation>
    <scope>FUNCTION</scope>
    <scope>CATALYTIC ACTIVITY</scope>
    <scope>PATHWAY</scope>
</reference>
<reference key="5">
    <citation type="journal article" date="1972" name="Science">
        <title>Metabolite distribution in cells.</title>
        <authorList>
            <person name="Davis R.H."/>
        </authorList>
    </citation>
    <scope>FUNCTION</scope>
</reference>
<reference key="6">
    <citation type="journal article" date="1973" name="Science">
        <authorList>
            <person name="Davis R.H."/>
        </authorList>
    </citation>
    <scope>ERRATUM OF PUBMED:5085981</scope>
</reference>
<reference key="7">
    <citation type="journal article" date="1973" name="J. Biol. Chem.">
        <title>Intracellular localization of enzymes of arginine metabolism in Neurospora.</title>
        <authorList>
            <person name="Weiss R.L."/>
            <person name="Davis R.H."/>
        </authorList>
    </citation>
    <scope>SUBCELLULAR LOCATION</scope>
</reference>
<reference key="8">
    <citation type="journal article" date="1975" name="J. Bacteriol.">
        <title>Organization and control in the arginine biosynthetic pathway of Neurospora.</title>
        <authorList>
            <person name="Cybis J."/>
            <person name="Davis R.H."/>
        </authorList>
    </citation>
    <scope>INDUCTION</scope>
</reference>
<reference key="9">
    <citation type="journal article" date="1980" name="J. Bacteriol.">
        <title>Carbamyl phosphate synthetase A of Neurospora crassa.</title>
        <authorList>
            <person name="Davis R.H."/>
            <person name="Ristow J.L."/>
            <person name="Hanson B.A."/>
        </authorList>
    </citation>
    <scope>CATALYTIC ACTIVITY</scope>
    <scope>BIOPHYSICOCHEMICAL PROPERTIES</scope>
    <scope>SUBCELLULAR LOCATION</scope>
</reference>
<reference key="10">
    <citation type="journal article" date="1981" name="Mol. Gen. Genet.">
        <title>Independent localization and regulation of carbamyl phosphate synthetase A polypeptides of Neurospora crassa.</title>
        <authorList>
            <person name="Davis R.H."/>
            <person name="Ristow J.L."/>
            <person name="Ginsburgh C.L."/>
        </authorList>
    </citation>
    <scope>SUBUNIT</scope>
    <scope>SUBCELLULAR LOCATION</scope>
</reference>
<reference key="11">
    <citation type="journal article" date="1987" name="J. Biol. Chem.">
        <title>Arginine-specific carbamoyl phosphate metabolism in mitochondria of Neurospora crassa. Channeling and control by arginine.</title>
        <authorList>
            <person name="Davis R.H."/>
            <person name="Ristow J.L."/>
        </authorList>
    </citation>
    <scope>FUNCTION</scope>
</reference>
<dbReference type="EC" id="6.3.5.5"/>
<dbReference type="EMBL" id="J05512">
    <property type="protein sequence ID" value="AAA33609.1"/>
    <property type="status" value="ALT_FRAME"/>
    <property type="molecule type" value="Genomic_DNA"/>
</dbReference>
<dbReference type="EMBL" id="CM002239">
    <property type="protein sequence ID" value="ESA42831.1"/>
    <property type="molecule type" value="Genomic_DNA"/>
</dbReference>
<dbReference type="EMBL" id="CM002239">
    <property type="protein sequence ID" value="ESA42832.1"/>
    <property type="molecule type" value="Genomic_DNA"/>
</dbReference>
<dbReference type="PIR" id="A42224">
    <property type="entry name" value="A42224"/>
</dbReference>
<dbReference type="RefSeq" id="XP_011394270.1">
    <property type="nucleotide sequence ID" value="XM_011395968.1"/>
</dbReference>
<dbReference type="RefSeq" id="XP_011394271.1">
    <property type="nucleotide sequence ID" value="XM_011395969.1"/>
</dbReference>
<dbReference type="SMR" id="P22572"/>
<dbReference type="FunCoup" id="P22572">
    <property type="interactions" value="345"/>
</dbReference>
<dbReference type="STRING" id="367110.P22572"/>
<dbReference type="PaxDb" id="5141-EFNCRP00000008065"/>
<dbReference type="EnsemblFungi" id="ESA42831">
    <property type="protein sequence ID" value="ESA42831"/>
    <property type="gene ID" value="NCU07732"/>
</dbReference>
<dbReference type="EnsemblFungi" id="ESA42832">
    <property type="protein sequence ID" value="ESA42832"/>
    <property type="gene ID" value="NCU07732"/>
</dbReference>
<dbReference type="GeneID" id="3878130"/>
<dbReference type="KEGG" id="ncr:NCU07732"/>
<dbReference type="VEuPathDB" id="FungiDB:NCU07732"/>
<dbReference type="HOGENOM" id="CLU_035901_1_0_1"/>
<dbReference type="InParanoid" id="P22572"/>
<dbReference type="OMA" id="CFSVQYH"/>
<dbReference type="OrthoDB" id="434at2759"/>
<dbReference type="UniPathway" id="UPA00068">
    <property type="reaction ID" value="UER00171"/>
</dbReference>
<dbReference type="Proteomes" id="UP000001805">
    <property type="component" value="Chromosome 4, Linkage Group IV"/>
</dbReference>
<dbReference type="GO" id="GO:0005951">
    <property type="term" value="C:carbamoyl-phosphate synthase complex"/>
    <property type="evidence" value="ECO:0000318"/>
    <property type="project" value="GO_Central"/>
</dbReference>
<dbReference type="GO" id="GO:0005737">
    <property type="term" value="C:cytoplasm"/>
    <property type="evidence" value="ECO:0000318"/>
    <property type="project" value="GO_Central"/>
</dbReference>
<dbReference type="GO" id="GO:0005759">
    <property type="term" value="C:mitochondrial matrix"/>
    <property type="evidence" value="ECO:0007669"/>
    <property type="project" value="UniProtKB-SubCell"/>
</dbReference>
<dbReference type="GO" id="GO:0005524">
    <property type="term" value="F:ATP binding"/>
    <property type="evidence" value="ECO:0007669"/>
    <property type="project" value="UniProtKB-KW"/>
</dbReference>
<dbReference type="GO" id="GO:0004088">
    <property type="term" value="F:carbamoyl-phosphate synthase (glutamine-hydrolyzing) activity"/>
    <property type="evidence" value="ECO:0007669"/>
    <property type="project" value="UniProtKB-EC"/>
</dbReference>
<dbReference type="GO" id="GO:0004359">
    <property type="term" value="F:glutaminase activity"/>
    <property type="evidence" value="ECO:0007669"/>
    <property type="project" value="RHEA"/>
</dbReference>
<dbReference type="GO" id="GO:0006207">
    <property type="term" value="P:'de novo' pyrimidine nucleobase biosynthetic process"/>
    <property type="evidence" value="ECO:0007669"/>
    <property type="project" value="InterPro"/>
</dbReference>
<dbReference type="GO" id="GO:0006541">
    <property type="term" value="P:glutamine metabolic process"/>
    <property type="evidence" value="ECO:0007669"/>
    <property type="project" value="InterPro"/>
</dbReference>
<dbReference type="GO" id="GO:0006526">
    <property type="term" value="P:L-arginine biosynthetic process"/>
    <property type="evidence" value="ECO:0000318"/>
    <property type="project" value="GO_Central"/>
</dbReference>
<dbReference type="GO" id="GO:0006221">
    <property type="term" value="P:pyrimidine nucleotide biosynthetic process"/>
    <property type="evidence" value="ECO:0007669"/>
    <property type="project" value="EnsemblFungi"/>
</dbReference>
<dbReference type="CDD" id="cd01744">
    <property type="entry name" value="GATase1_CPSase"/>
    <property type="match status" value="1"/>
</dbReference>
<dbReference type="FunFam" id="3.40.50.880:FF:000016">
    <property type="entry name" value="Carbamoyl-phosphate synthase arginine-specific small chain"/>
    <property type="match status" value="1"/>
</dbReference>
<dbReference type="FunFam" id="3.50.30.20:FF:000003">
    <property type="entry name" value="Carbamoyl-phosphate synthase arginine-specific small chain"/>
    <property type="match status" value="1"/>
</dbReference>
<dbReference type="Gene3D" id="3.40.50.880">
    <property type="match status" value="1"/>
</dbReference>
<dbReference type="Gene3D" id="3.50.30.20">
    <property type="entry name" value="Carbamoyl-phosphate synthase small subunit, N-terminal domain"/>
    <property type="match status" value="1"/>
</dbReference>
<dbReference type="HAMAP" id="MF_01209">
    <property type="entry name" value="CPSase_S_chain"/>
    <property type="match status" value="1"/>
</dbReference>
<dbReference type="InterPro" id="IPR006274">
    <property type="entry name" value="CarbamoylP_synth_ssu"/>
</dbReference>
<dbReference type="InterPro" id="IPR002474">
    <property type="entry name" value="CarbamoylP_synth_ssu_N"/>
</dbReference>
<dbReference type="InterPro" id="IPR036480">
    <property type="entry name" value="CarbP_synth_ssu_N_sf"/>
</dbReference>
<dbReference type="InterPro" id="IPR029062">
    <property type="entry name" value="Class_I_gatase-like"/>
</dbReference>
<dbReference type="InterPro" id="IPR035686">
    <property type="entry name" value="CPSase_GATase1"/>
</dbReference>
<dbReference type="InterPro" id="IPR017926">
    <property type="entry name" value="GATASE"/>
</dbReference>
<dbReference type="NCBIfam" id="TIGR01368">
    <property type="entry name" value="CPSaseIIsmall"/>
    <property type="match status" value="1"/>
</dbReference>
<dbReference type="NCBIfam" id="NF009475">
    <property type="entry name" value="PRK12838.1"/>
    <property type="match status" value="1"/>
</dbReference>
<dbReference type="PANTHER" id="PTHR11405:SF4">
    <property type="entry name" value="CARBAMOYL-PHOSPHATE SYNTHASE ARGININE-SPECIFIC SMALL CHAIN"/>
    <property type="match status" value="1"/>
</dbReference>
<dbReference type="PANTHER" id="PTHR11405">
    <property type="entry name" value="CARBAMOYLTRANSFERASE FAMILY MEMBER"/>
    <property type="match status" value="1"/>
</dbReference>
<dbReference type="Pfam" id="PF00988">
    <property type="entry name" value="CPSase_sm_chain"/>
    <property type="match status" value="1"/>
</dbReference>
<dbReference type="Pfam" id="PF00117">
    <property type="entry name" value="GATase"/>
    <property type="match status" value="1"/>
</dbReference>
<dbReference type="PRINTS" id="PR00097">
    <property type="entry name" value="ANTSNTHASEII"/>
</dbReference>
<dbReference type="PRINTS" id="PR00099">
    <property type="entry name" value="CPSGATASE"/>
</dbReference>
<dbReference type="PRINTS" id="PR00096">
    <property type="entry name" value="GATASE"/>
</dbReference>
<dbReference type="SMART" id="SM01097">
    <property type="entry name" value="CPSase_sm_chain"/>
    <property type="match status" value="1"/>
</dbReference>
<dbReference type="SUPFAM" id="SSF52021">
    <property type="entry name" value="Carbamoyl phosphate synthetase, small subunit N-terminal domain"/>
    <property type="match status" value="1"/>
</dbReference>
<dbReference type="SUPFAM" id="SSF52317">
    <property type="entry name" value="Class I glutamine amidotransferase-like"/>
    <property type="match status" value="1"/>
</dbReference>
<dbReference type="PROSITE" id="PS51273">
    <property type="entry name" value="GATASE_TYPE_1"/>
    <property type="match status" value="1"/>
</dbReference>
<gene>
    <name type="primary">arg-2</name>
    <name type="synonym">cpa1</name>
    <name type="ORF">NCU07732</name>
</gene>
<protein>
    <recommendedName>
        <fullName>Carbamoyl phosphate synthase arginine-specific small chain</fullName>
        <shortName>CPS</shortName>
        <shortName>CPS-arg</shortName>
        <shortName>CPSase</shortName>
        <ecNumber>6.3.5.5</ecNumber>
    </recommendedName>
    <alternativeName>
        <fullName>Arginine-specific carbamoyl phosphate synthetase, glutamine chain</fullName>
    </alternativeName>
    <alternativeName>
        <fullName>Glutamine-dependent carbamoyl phosphate synthetase</fullName>
    </alternativeName>
</protein>
<name>CARA_NEUCR</name>
<feature type="transit peptide" description="Mitochondrion" evidence="2">
    <location>
        <begin position="1"/>
        <end position="33"/>
    </location>
</feature>
<feature type="chain" id="PRO_0000004222" description="Carbamoyl phosphate synthase arginine-specific small chain">
    <location>
        <begin position="34"/>
        <end position="453"/>
    </location>
</feature>
<feature type="domain" description="Glutamine amidotransferase type-1" evidence="3">
    <location>
        <begin position="233"/>
        <end position="420"/>
    </location>
</feature>
<feature type="region of interest" description="Disordered" evidence="4">
    <location>
        <begin position="26"/>
        <end position="50"/>
    </location>
</feature>
<feature type="active site" description="Nucleophile" evidence="3">
    <location>
        <position position="309"/>
    </location>
</feature>
<feature type="active site" evidence="3">
    <location>
        <position position="393"/>
    </location>
</feature>
<feature type="active site" evidence="3">
    <location>
        <position position="395"/>
    </location>
</feature>
<feature type="binding site" evidence="1">
    <location>
        <position position="97"/>
    </location>
    <ligand>
        <name>L-glutamine</name>
        <dbReference type="ChEBI" id="CHEBI:58359"/>
    </ligand>
</feature>
<feature type="binding site" evidence="1">
    <location>
        <position position="280"/>
    </location>
    <ligand>
        <name>L-glutamine</name>
        <dbReference type="ChEBI" id="CHEBI:58359"/>
    </ligand>
</feature>
<feature type="binding site" evidence="1">
    <location>
        <position position="282"/>
    </location>
    <ligand>
        <name>L-glutamine</name>
        <dbReference type="ChEBI" id="CHEBI:58359"/>
    </ligand>
</feature>
<feature type="binding site" evidence="1">
    <location>
        <position position="310"/>
    </location>
    <ligand>
        <name>L-glutamine</name>
        <dbReference type="ChEBI" id="CHEBI:58359"/>
    </ligand>
</feature>
<feature type="binding site" evidence="1">
    <location>
        <position position="313"/>
    </location>
    <ligand>
        <name>L-glutamine</name>
        <dbReference type="ChEBI" id="CHEBI:58359"/>
    </ligand>
</feature>
<feature type="binding site" evidence="1">
    <location>
        <position position="351"/>
    </location>
    <ligand>
        <name>L-glutamine</name>
        <dbReference type="ChEBI" id="CHEBI:58359"/>
    </ligand>
</feature>
<feature type="binding site" evidence="1">
    <location>
        <position position="353"/>
    </location>
    <ligand>
        <name>L-glutamine</name>
        <dbReference type="ChEBI" id="CHEBI:58359"/>
    </ligand>
</feature>
<feature type="binding site" evidence="1">
    <location>
        <position position="354"/>
    </location>
    <ligand>
        <name>L-glutamine</name>
        <dbReference type="ChEBI" id="CHEBI:58359"/>
    </ligand>
</feature>
<sequence length="453" mass="49355">MFSRLAARLPKASALNGVAARQVRNLSQPAITGSKGRNMPAREPRTTAAATGAEATFTIRDGPVFQGTAFGANTNISGEAVFTTSLVGYPESMTDPSYRGQILVFTQPLIGNYGVPSNERDEFNLLKYFESPHIQCAGIVVSDVATQYSHWTAVQSLGEWCASEGIPAISGVDTRAIVTYLREQGSSLARISIGDEYDADEDEGFIDPGQINLVKRVSTKAPFVVTNPNAKFHVALIDCGVKENILRSLVSRGASVTVFPYNYPIHKVAENFDGVFISNGPGDPTHCQETVYNLAKLMETSPIPIMGICLGHQLLALAVGAKTIKLKYGNRAHNIPALDLTTGQCHITSQNHGYAVDISTLPSDFKEYFVNLNDGSNEGMMHKTRPIFSTQFHPEAKGGPMDSSYLFDKYMENVELFKSNSQVYRDNRPTQFMIDILSKERVGVEPTPLSNAA</sequence>
<accession>P22572</accession>
<accession>Q7RVF2</accession>
<accession>V5IMB9</accession>
<organism>
    <name type="scientific">Neurospora crassa (strain ATCC 24698 / 74-OR23-1A / CBS 708.71 / DSM 1257 / FGSC 987)</name>
    <dbReference type="NCBI Taxonomy" id="367110"/>
    <lineage>
        <taxon>Eukaryota</taxon>
        <taxon>Fungi</taxon>
        <taxon>Dikarya</taxon>
        <taxon>Ascomycota</taxon>
        <taxon>Pezizomycotina</taxon>
        <taxon>Sordariomycetes</taxon>
        <taxon>Sordariomycetidae</taxon>
        <taxon>Sordariales</taxon>
        <taxon>Sordariaceae</taxon>
        <taxon>Neurospora</taxon>
    </lineage>
</organism>
<evidence type="ECO:0000250" key="1">
    <source>
        <dbReference type="UniProtKB" id="P0A6F1"/>
    </source>
</evidence>
<evidence type="ECO:0000255" key="2"/>
<evidence type="ECO:0000255" key="3">
    <source>
        <dbReference type="PROSITE-ProRule" id="PRU00605"/>
    </source>
</evidence>
<evidence type="ECO:0000256" key="4">
    <source>
        <dbReference type="SAM" id="MobiDB-lite"/>
    </source>
</evidence>
<evidence type="ECO:0000269" key="5">
    <source>
    </source>
</evidence>
<evidence type="ECO:0000269" key="6">
    <source>
    </source>
</evidence>
<evidence type="ECO:0000269" key="7">
    <source>
    </source>
</evidence>
<evidence type="ECO:0000269" key="8">
    <source>
    </source>
</evidence>
<evidence type="ECO:0000269" key="9">
    <source>
    </source>
</evidence>
<evidence type="ECO:0000269" key="10">
    <source>
    </source>
</evidence>
<evidence type="ECO:0000269" key="11">
    <source ref="4"/>
</evidence>
<evidence type="ECO:0000305" key="12"/>
<evidence type="ECO:0000305" key="13">
    <source>
    </source>
</evidence>
<evidence type="ECO:0000305" key="14">
    <source>
    </source>
</evidence>
<evidence type="ECO:0000305" key="15">
    <source>
    </source>
</evidence>
<evidence type="ECO:0000305" key="16">
    <source ref="4"/>
</evidence>
<comment type="function">
    <text evidence="7 8 11">Small subunit of the arginine-specific carbamoyl phosphate synthase (CPSase). CPSase catalyzes the formation of carbamoyl phosphate from the ammonia moiety of glutamine, carbonate, and phosphate donated by ATP, the first step of the arginine biosynthetic pathway. The small subunit (glutamine amidotransferase) binds and cleaves glutamine to supply the large subunit with the substrate ammonia.</text>
</comment>
<comment type="catalytic activity">
    <reaction evidence="9 11">
        <text>hydrogencarbonate + L-glutamine + 2 ATP + H2O = carbamoyl phosphate + L-glutamate + 2 ADP + phosphate + 2 H(+)</text>
        <dbReference type="Rhea" id="RHEA:18633"/>
        <dbReference type="ChEBI" id="CHEBI:15377"/>
        <dbReference type="ChEBI" id="CHEBI:15378"/>
        <dbReference type="ChEBI" id="CHEBI:17544"/>
        <dbReference type="ChEBI" id="CHEBI:29985"/>
        <dbReference type="ChEBI" id="CHEBI:30616"/>
        <dbReference type="ChEBI" id="CHEBI:43474"/>
        <dbReference type="ChEBI" id="CHEBI:58228"/>
        <dbReference type="ChEBI" id="CHEBI:58359"/>
        <dbReference type="ChEBI" id="CHEBI:456216"/>
        <dbReference type="EC" id="6.3.5.5"/>
    </reaction>
</comment>
<comment type="catalytic activity">
    <molecule>Carbamoyl phosphate synthase arginine-specific small chain</molecule>
    <reaction evidence="11">
        <text>L-glutamine + H2O = L-glutamate + NH4(+)</text>
        <dbReference type="Rhea" id="RHEA:15889"/>
        <dbReference type="ChEBI" id="CHEBI:15377"/>
        <dbReference type="ChEBI" id="CHEBI:28938"/>
        <dbReference type="ChEBI" id="CHEBI:29985"/>
        <dbReference type="ChEBI" id="CHEBI:58359"/>
    </reaction>
</comment>
<comment type="biophysicochemical properties">
    <kinetics>
        <KM evidence="9">0.16 mM for glutamine</KM>
    </kinetics>
    <phDependence>
        <text evidence="9">Optimum pH is 7.8-8.0.</text>
    </phDependence>
</comment>
<comment type="pathway">
    <text evidence="16">Amino-acid biosynthesis; L-arginine biosynthesis; carbamoyl phosphate from bicarbonate: step 1/1.</text>
</comment>
<comment type="subunit">
    <text evidence="10">Heterodimer composed of 2 chains; the small (or glutamine) chain promotes the hydrolysis of glutamine to ammonia, which is used by the large (or ammonia) chain to synthesize carbamoyl phosphate.</text>
</comment>
<comment type="subcellular location">
    <subcellularLocation>
        <location evidence="6 9 10">Mitochondrion matrix</location>
    </subcellularLocation>
</comment>
<comment type="induction">
    <text evidence="5">Repressed by arginine.</text>
</comment>
<comment type="miscellaneous">
    <text evidence="13 14 15">In N.crassa, this enzyme is synthesized by two pathway-specific (arginine and pyrimidine) genes under separate control. One is linked to the arginine pathway and is designated CPSase A (arg-2 and arg-3), it is localized to mitochondria and repressed by arginine. A second one, CPSase P, is part of a multifunctional protein (pyr-3) encoding 3 enzymatic activities of the pyrimidine pathway (GATase, CPSase, and ATCase); it is localized to the cytoplasm and feedback inhibited and repressed by pyrimidines. The carbamoyl phosphate synthesized by each synthase is channeled to its respective pathway, in contrast to Saccharomyces cerevisiae, in which the 2 synthases are localized to the cytoplasm and appear to contribute to the formation of a single cellular pool of carbamoyl phosphate.</text>
</comment>
<comment type="similarity">
    <text evidence="12">Belongs to the CarA family.</text>
</comment>
<comment type="sequence caution" evidence="12">
    <conflict type="frameshift">
        <sequence resource="EMBL-CDS" id="AAA33609"/>
    </conflict>
</comment>